<gene>
    <name type="primary">Cdh6</name>
</gene>
<protein>
    <recommendedName>
        <fullName>Cadherin-6</fullName>
    </recommendedName>
    <alternativeName>
        <fullName>Kidney cadherin</fullName>
        <shortName>K-cadherin</shortName>
    </alternativeName>
</protein>
<accession>P97326</accession>
<accession>P70393</accession>
<accession>Q3KNY8</accession>
<reference key="1">
    <citation type="journal article" date="1997" name="Dev. Biol.">
        <title>Cadherin-6 expression transiently delineates specific rhombomeres, other neural tube subdivisions, and neural crest subpopulations in mouse embryos.</title>
        <authorList>
            <person name="Inoue T."/>
            <person name="Chisaka O."/>
            <person name="Matsunami H."/>
            <person name="Takeichi M."/>
        </authorList>
    </citation>
    <scope>NUCLEOTIDE SEQUENCE [MRNA]</scope>
</reference>
<reference key="2">
    <citation type="journal article" date="2004" name="Genome Res.">
        <title>The status, quality, and expansion of the NIH full-length cDNA project: the Mammalian Gene Collection (MGC).</title>
        <authorList>
            <consortium name="The MGC Project Team"/>
        </authorList>
    </citation>
    <scope>NUCLEOTIDE SEQUENCE [LARGE SCALE MRNA]</scope>
</reference>
<reference key="3">
    <citation type="submission" date="1996-08" db="EMBL/GenBank/DDBJ databases">
        <authorList>
            <person name="Faulkner-Jones B.E."/>
            <person name="Dziadek M.A."/>
        </authorList>
    </citation>
    <scope>NUCLEOTIDE SEQUENCE [MRNA] OF 479-666</scope>
    <source>
        <strain>C57BL/6 X CBA</strain>
        <tissue>Kidney</tissue>
    </source>
</reference>
<reference key="4">
    <citation type="journal article" date="1996" name="Biol. Reprod.">
        <title>A comprehensive survey of the cadherins expressed in the testes of fetal, immature, and adult mice utilizing the polymerase chain reaction.</title>
        <authorList>
            <person name="Munro S.B."/>
            <person name="Blaschuk O.W."/>
        </authorList>
    </citation>
    <scope>DEVELOPMENTAL STAGE</scope>
    <source>
        <strain>C57BL/6J</strain>
        <tissue>Testis</tissue>
    </source>
</reference>
<reference key="5">
    <citation type="journal article" date="2010" name="Cell">
        <title>A tissue-specific atlas of mouse protein phosphorylation and expression.</title>
        <authorList>
            <person name="Huttlin E.L."/>
            <person name="Jedrychowski M.P."/>
            <person name="Elias J.E."/>
            <person name="Goswami T."/>
            <person name="Rad R."/>
            <person name="Beausoleil S.A."/>
            <person name="Villen J."/>
            <person name="Haas W."/>
            <person name="Sowa M.E."/>
            <person name="Gygi S.P."/>
        </authorList>
    </citation>
    <scope>PHOSPHORYLATION [LARGE SCALE ANALYSIS] AT SER-786 AND SER-790</scope>
    <scope>IDENTIFICATION BY MASS SPECTROMETRY [LARGE SCALE ANALYSIS]</scope>
    <source>
        <tissue>Brain</tissue>
        <tissue>Kidney</tissue>
    </source>
</reference>
<sequence length="790" mass="88355">MRTYRYFLLLFWVGQPYPTFSNPLSKRTSGFPAKRKALELSANSRNELSRSKRSWMWNQFFLLEEYTGSDYQYVGKLHSDQDRGDGSLKYILSGDGAGDLFIINENTGDIQATKRLDREEKPVYILRAQAVNRRTGRPVEPESEFIIKIHDINDNEPIFTKDVYTATVPEMADVGTFVVQVTATDADDPTYGNSAKVVYSILQGQPYFSVESETGIIKTALLNMDRENREQYQVVIQAKDMGGQMGGLSGTTTVNITLTDVNDNPPRFPQSTYQFKTPESSPPGTPIGRIKASDADVGENAEIEYSITDGEGHEMFDVITDQETQEGIITVKKLLDFEKKKVYTLKVEASNPHVEPRFLYLGPFKDSATVRIVVDDVDEPPVFSKLAYILQIREDARINTTIGSVAAQDPDAARNPVKYSVDRHTDMDRIFNIDSGNGSIFTSKLLDRETLLWHNITVIATEINNPKQSSRVPLYIKVLDVNDNAPEFAEFYETFVCEKAKADQLIQTLRAVDKDDPYSGHQFSFSLAPEAASSSNFTIQDNKDNTAGILTRKNGYNRHEMSTYLLPVVISDNDYPVQSSTGTVTVRVCACDHHGNMQSCHAEALIHPTGLSTGALVAILLCIVILLVTVVLFAALRRQRKKEPLIISKEDIRDNIVSYNDEGGGEEDTQAFDIGTLRNPEAMEDSKSRRDIVPEALFLPRRTPTARDNTDVRDFINQRLKENDTDPTAPPYDSLATYAYEGTGSVADSLSSLESVTTDGDQDYDYLSDWGPRFKKLADMYGGMDSDKDS</sequence>
<proteinExistence type="evidence at protein level"/>
<name>CADH6_MOUSE</name>
<dbReference type="EMBL" id="D82029">
    <property type="protein sequence ID" value="BAA11516.1"/>
    <property type="molecule type" value="mRNA"/>
</dbReference>
<dbReference type="EMBL" id="BC107013">
    <property type="protein sequence ID" value="AAI07014.1"/>
    <property type="molecule type" value="mRNA"/>
</dbReference>
<dbReference type="EMBL" id="U67399">
    <property type="protein sequence ID" value="AAB07550.1"/>
    <property type="molecule type" value="mRNA"/>
</dbReference>
<dbReference type="CCDS" id="CCDS27393.1"/>
<dbReference type="RefSeq" id="NP_031692.2">
    <property type="nucleotide sequence ID" value="NM_007666.4"/>
</dbReference>
<dbReference type="RefSeq" id="XP_006520080.1">
    <property type="nucleotide sequence ID" value="XM_006520017.2"/>
</dbReference>
<dbReference type="RefSeq" id="XP_036015001.1">
    <property type="nucleotide sequence ID" value="XM_036159108.1"/>
</dbReference>
<dbReference type="PDB" id="3LND">
    <property type="method" value="X-ray"/>
    <property type="resolution" value="2.82 A"/>
    <property type="chains" value="A/B/C/D=58-260"/>
</dbReference>
<dbReference type="PDB" id="6CGB">
    <property type="method" value="X-ray"/>
    <property type="resolution" value="2.99 A"/>
    <property type="chains" value="A=156-260"/>
</dbReference>
<dbReference type="PDB" id="6CGU">
    <property type="method" value="X-ray"/>
    <property type="resolution" value="1.90 A"/>
    <property type="chains" value="A/B/C/D=54-260"/>
</dbReference>
<dbReference type="PDBsum" id="3LND"/>
<dbReference type="PDBsum" id="6CGB"/>
<dbReference type="PDBsum" id="6CGU"/>
<dbReference type="SMR" id="P97326"/>
<dbReference type="FunCoup" id="P97326">
    <property type="interactions" value="78"/>
</dbReference>
<dbReference type="IntAct" id="P97326">
    <property type="interactions" value="1"/>
</dbReference>
<dbReference type="MINT" id="P97326"/>
<dbReference type="STRING" id="10090.ENSMUSP00000037113"/>
<dbReference type="GlyConnect" id="2171">
    <property type="glycosylation" value="4 N-Linked glycans (2 sites)"/>
</dbReference>
<dbReference type="GlyCosmos" id="P97326">
    <property type="glycosylation" value="5 sites, 4 glycans"/>
</dbReference>
<dbReference type="GlyGen" id="P97326">
    <property type="glycosylation" value="8 sites, 9 N-linked glycans (5 sites), 1 O-linked glycan (3 sites)"/>
</dbReference>
<dbReference type="iPTMnet" id="P97326"/>
<dbReference type="PhosphoSitePlus" id="P97326"/>
<dbReference type="PaxDb" id="10090-ENSMUSP00000037113"/>
<dbReference type="PeptideAtlas" id="P97326"/>
<dbReference type="ProteomicsDB" id="265417"/>
<dbReference type="Antibodypedia" id="2354">
    <property type="antibodies" value="456 antibodies from 37 providers"/>
</dbReference>
<dbReference type="DNASU" id="12563"/>
<dbReference type="Ensembl" id="ENSMUST00000036439.6">
    <property type="protein sequence ID" value="ENSMUSP00000037113.5"/>
    <property type="gene ID" value="ENSMUSG00000039385.6"/>
</dbReference>
<dbReference type="GeneID" id="12563"/>
<dbReference type="KEGG" id="mmu:12563"/>
<dbReference type="UCSC" id="uc007vif.1">
    <property type="organism name" value="mouse"/>
</dbReference>
<dbReference type="AGR" id="MGI:107435"/>
<dbReference type="CTD" id="1004"/>
<dbReference type="MGI" id="MGI:107435">
    <property type="gene designation" value="Cdh6"/>
</dbReference>
<dbReference type="VEuPathDB" id="HostDB:ENSMUSG00000039385"/>
<dbReference type="eggNOG" id="KOG3594">
    <property type="taxonomic scope" value="Eukaryota"/>
</dbReference>
<dbReference type="GeneTree" id="ENSGT00940000154673"/>
<dbReference type="HOGENOM" id="CLU_005284_3_1_1"/>
<dbReference type="InParanoid" id="P97326"/>
<dbReference type="OMA" id="RQDLHRS"/>
<dbReference type="OrthoDB" id="6252479at2759"/>
<dbReference type="PhylomeDB" id="P97326"/>
<dbReference type="TreeFam" id="TF329887"/>
<dbReference type="Reactome" id="R-MMU-418990">
    <property type="pathway name" value="Adherens junctions interactions"/>
</dbReference>
<dbReference type="BioGRID-ORCS" id="12563">
    <property type="hits" value="5 hits in 78 CRISPR screens"/>
</dbReference>
<dbReference type="ChiTaRS" id="Cdh6">
    <property type="organism name" value="mouse"/>
</dbReference>
<dbReference type="EvolutionaryTrace" id="P97326"/>
<dbReference type="PRO" id="PR:P97326"/>
<dbReference type="Proteomes" id="UP000000589">
    <property type="component" value="Chromosome 15"/>
</dbReference>
<dbReference type="RNAct" id="P97326">
    <property type="molecule type" value="protein"/>
</dbReference>
<dbReference type="Bgee" id="ENSMUSG00000039385">
    <property type="expression patterns" value="Expressed in metanephric proximal tubule and 224 other cell types or tissues"/>
</dbReference>
<dbReference type="GO" id="GO:0098978">
    <property type="term" value="C:glutamatergic synapse"/>
    <property type="evidence" value="ECO:0000314"/>
    <property type="project" value="SynGO"/>
</dbReference>
<dbReference type="GO" id="GO:0005654">
    <property type="term" value="C:nucleoplasm"/>
    <property type="evidence" value="ECO:0007669"/>
    <property type="project" value="Ensembl"/>
</dbReference>
<dbReference type="GO" id="GO:0005886">
    <property type="term" value="C:plasma membrane"/>
    <property type="evidence" value="ECO:0000314"/>
    <property type="project" value="MGI"/>
</dbReference>
<dbReference type="GO" id="GO:0045202">
    <property type="term" value="C:synapse"/>
    <property type="evidence" value="ECO:0000314"/>
    <property type="project" value="SynGO"/>
</dbReference>
<dbReference type="GO" id="GO:0005509">
    <property type="term" value="F:calcium ion binding"/>
    <property type="evidence" value="ECO:0007669"/>
    <property type="project" value="InterPro"/>
</dbReference>
<dbReference type="GO" id="GO:0007156">
    <property type="term" value="P:homophilic cell adhesion via plasma membrane adhesion molecules"/>
    <property type="evidence" value="ECO:0007669"/>
    <property type="project" value="InterPro"/>
</dbReference>
<dbReference type="GO" id="GO:0007219">
    <property type="term" value="P:Notch signaling pathway"/>
    <property type="evidence" value="ECO:0000314"/>
    <property type="project" value="MGI"/>
</dbReference>
<dbReference type="GO" id="GO:0099560">
    <property type="term" value="P:synaptic membrane adhesion"/>
    <property type="evidence" value="ECO:0000314"/>
    <property type="project" value="SynGO"/>
</dbReference>
<dbReference type="CDD" id="cd11304">
    <property type="entry name" value="Cadherin_repeat"/>
    <property type="match status" value="5"/>
</dbReference>
<dbReference type="FunFam" id="2.60.40.60:FF:000297">
    <property type="entry name" value="Cadherin 12"/>
    <property type="match status" value="1"/>
</dbReference>
<dbReference type="FunFam" id="2.60.40.60:FF:000009">
    <property type="entry name" value="Cadherin 24"/>
    <property type="match status" value="1"/>
</dbReference>
<dbReference type="FunFam" id="2.60.40.60:FF:000012">
    <property type="entry name" value="Cadherin 24"/>
    <property type="match status" value="1"/>
</dbReference>
<dbReference type="FunFam" id="2.60.40.60:FF:000017">
    <property type="entry name" value="Cadherin 24"/>
    <property type="match status" value="1"/>
</dbReference>
<dbReference type="FunFam" id="2.60.40.60:FF:000014">
    <property type="entry name" value="Cadherin 8"/>
    <property type="match status" value="1"/>
</dbReference>
<dbReference type="FunFam" id="4.10.900.10:FF:000006">
    <property type="entry name" value="Cadherin-9 preproprotein"/>
    <property type="match status" value="1"/>
</dbReference>
<dbReference type="Gene3D" id="2.60.40.60">
    <property type="entry name" value="Cadherins"/>
    <property type="match status" value="5"/>
</dbReference>
<dbReference type="Gene3D" id="4.10.900.10">
    <property type="entry name" value="TCF3-CBD (Catenin binding domain)"/>
    <property type="match status" value="1"/>
</dbReference>
<dbReference type="InterPro" id="IPR039808">
    <property type="entry name" value="Cadherin"/>
</dbReference>
<dbReference type="InterPro" id="IPR002126">
    <property type="entry name" value="Cadherin-like_dom"/>
</dbReference>
<dbReference type="InterPro" id="IPR015919">
    <property type="entry name" value="Cadherin-like_sf"/>
</dbReference>
<dbReference type="InterPro" id="IPR020894">
    <property type="entry name" value="Cadherin_CS"/>
</dbReference>
<dbReference type="InterPro" id="IPR000233">
    <property type="entry name" value="Cadherin_Y-type_LIR"/>
</dbReference>
<dbReference type="InterPro" id="IPR027397">
    <property type="entry name" value="Catenin-bd_sf"/>
</dbReference>
<dbReference type="PANTHER" id="PTHR24027">
    <property type="entry name" value="CADHERIN-23"/>
    <property type="match status" value="1"/>
</dbReference>
<dbReference type="PANTHER" id="PTHR24027:SF322">
    <property type="entry name" value="CADHERIN-6"/>
    <property type="match status" value="1"/>
</dbReference>
<dbReference type="Pfam" id="PF01049">
    <property type="entry name" value="CADH_Y-type_LIR"/>
    <property type="match status" value="1"/>
</dbReference>
<dbReference type="Pfam" id="PF00028">
    <property type="entry name" value="Cadherin"/>
    <property type="match status" value="5"/>
</dbReference>
<dbReference type="PRINTS" id="PR00205">
    <property type="entry name" value="CADHERIN"/>
</dbReference>
<dbReference type="SMART" id="SM00112">
    <property type="entry name" value="CA"/>
    <property type="match status" value="5"/>
</dbReference>
<dbReference type="SUPFAM" id="SSF49313">
    <property type="entry name" value="Cadherin-like"/>
    <property type="match status" value="5"/>
</dbReference>
<dbReference type="PROSITE" id="PS00232">
    <property type="entry name" value="CADHERIN_1"/>
    <property type="match status" value="3"/>
</dbReference>
<dbReference type="PROSITE" id="PS50268">
    <property type="entry name" value="CADHERIN_2"/>
    <property type="match status" value="5"/>
</dbReference>
<organism>
    <name type="scientific">Mus musculus</name>
    <name type="common">Mouse</name>
    <dbReference type="NCBI Taxonomy" id="10090"/>
    <lineage>
        <taxon>Eukaryota</taxon>
        <taxon>Metazoa</taxon>
        <taxon>Chordata</taxon>
        <taxon>Craniata</taxon>
        <taxon>Vertebrata</taxon>
        <taxon>Euteleostomi</taxon>
        <taxon>Mammalia</taxon>
        <taxon>Eutheria</taxon>
        <taxon>Euarchontoglires</taxon>
        <taxon>Glires</taxon>
        <taxon>Rodentia</taxon>
        <taxon>Myomorpha</taxon>
        <taxon>Muroidea</taxon>
        <taxon>Muridae</taxon>
        <taxon>Murinae</taxon>
        <taxon>Mus</taxon>
        <taxon>Mus</taxon>
    </lineage>
</organism>
<feature type="signal peptide" evidence="2">
    <location>
        <begin position="1"/>
        <end position="18"/>
    </location>
</feature>
<feature type="propeptide" id="PRO_0000003763" evidence="2">
    <location>
        <begin position="19"/>
        <end position="53"/>
    </location>
</feature>
<feature type="chain" id="PRO_0000003764" description="Cadherin-6">
    <location>
        <begin position="54"/>
        <end position="790"/>
    </location>
</feature>
<feature type="topological domain" description="Extracellular" evidence="2">
    <location>
        <begin position="54"/>
        <end position="615"/>
    </location>
</feature>
<feature type="transmembrane region" description="Helical" evidence="2">
    <location>
        <begin position="616"/>
        <end position="636"/>
    </location>
</feature>
<feature type="topological domain" description="Cytoplasmic" evidence="2">
    <location>
        <begin position="637"/>
        <end position="790"/>
    </location>
</feature>
<feature type="domain" description="Cadherin 1" evidence="3">
    <location>
        <begin position="54"/>
        <end position="159"/>
    </location>
</feature>
<feature type="domain" description="Cadherin 2" evidence="3">
    <location>
        <begin position="160"/>
        <end position="268"/>
    </location>
</feature>
<feature type="domain" description="Cadherin 3" evidence="3">
    <location>
        <begin position="269"/>
        <end position="383"/>
    </location>
</feature>
<feature type="domain" description="Cadherin 4" evidence="3">
    <location>
        <begin position="384"/>
        <end position="486"/>
    </location>
</feature>
<feature type="domain" description="Cadherin 5" evidence="3">
    <location>
        <begin position="487"/>
        <end position="608"/>
    </location>
</feature>
<feature type="region of interest" description="Disordered" evidence="4">
    <location>
        <begin position="260"/>
        <end position="291"/>
    </location>
</feature>
<feature type="compositionally biased region" description="Polar residues" evidence="4">
    <location>
        <begin position="269"/>
        <end position="279"/>
    </location>
</feature>
<feature type="modified residue" description="Phosphoserine" evidence="7">
    <location>
        <position position="786"/>
    </location>
</feature>
<feature type="modified residue" description="Phosphoserine" evidence="7">
    <location>
        <position position="790"/>
    </location>
</feature>
<feature type="glycosylation site" description="N-linked (GlcNAc...) asparagine" evidence="2">
    <location>
        <position position="255"/>
    </location>
</feature>
<feature type="glycosylation site" description="N-linked (GlcNAc...) asparagine" evidence="2">
    <location>
        <position position="399"/>
    </location>
</feature>
<feature type="glycosylation site" description="N-linked (GlcNAc...) asparagine" evidence="2">
    <location>
        <position position="437"/>
    </location>
</feature>
<feature type="glycosylation site" description="N-linked (GlcNAc...) asparagine" evidence="2">
    <location>
        <position position="455"/>
    </location>
</feature>
<feature type="glycosylation site" description="N-linked (GlcNAc...) asparagine" evidence="2">
    <location>
        <position position="536"/>
    </location>
</feature>
<feature type="sequence conflict" description="In Ref. 1; BAA11516." evidence="6" ref="1">
    <original>N</original>
    <variation>D</variation>
    <location>
        <position position="43"/>
    </location>
</feature>
<feature type="sequence conflict" description="In Ref. 1; BAA11516." evidence="6" ref="1">
    <original>S</original>
    <variation>G</variation>
    <location>
        <position position="54"/>
    </location>
</feature>
<feature type="sequence conflict" description="In Ref. 1; BAA11516." evidence="6" ref="1">
    <original>E</original>
    <variation>G</variation>
    <location>
        <position position="65"/>
    </location>
</feature>
<feature type="sequence conflict" description="In Ref. 1; BAA11516." evidence="6" ref="1">
    <original>N</original>
    <variation>H</variation>
    <location>
        <position position="106"/>
    </location>
</feature>
<feature type="sequence conflict" description="In Ref. 1; BAA11516." evidence="6" ref="1">
    <original>KVE</original>
    <variation>RWK</variation>
    <location>
        <begin position="346"/>
        <end position="348"/>
    </location>
</feature>
<feature type="sequence conflict" description="In Ref. 1; BAA11516." evidence="6" ref="1">
    <original>G</original>
    <variation>V</variation>
    <location>
        <position position="403"/>
    </location>
</feature>
<feature type="sequence conflict" description="In Ref. 1; BAA11516." evidence="6" ref="1">
    <original>N</original>
    <variation>K</variation>
    <location>
        <position position="464"/>
    </location>
</feature>
<feature type="sequence conflict" description="In Ref. 3; AAB07550." evidence="6" ref="3">
    <original>S</original>
    <variation>G</variation>
    <location>
        <position position="534"/>
    </location>
</feature>
<feature type="sequence conflict" description="In Ref. 3; AAB07550." evidence="6" ref="3">
    <original>N</original>
    <variation>T</variation>
    <location>
        <position position="536"/>
    </location>
</feature>
<feature type="sequence conflict" description="In Ref. 1; BAA11516." evidence="6" ref="1">
    <original>MQ</original>
    <variation>IE</variation>
    <location>
        <begin position="597"/>
        <end position="598"/>
    </location>
</feature>
<feature type="sequence conflict" description="In Ref. 1; BAA11516." evidence="6" ref="1">
    <original>T</original>
    <variation>S</variation>
    <location>
        <position position="613"/>
    </location>
</feature>
<feature type="sequence conflict" description="In Ref. 1; BAA11516." evidence="6" ref="1">
    <original>R</original>
    <variation>E</variation>
    <location>
        <position position="640"/>
    </location>
</feature>
<feature type="sequence conflict" description="In Ref. 1; BAA11516." evidence="6" ref="1">
    <original>L</original>
    <variation>V</variation>
    <location>
        <position position="777"/>
    </location>
</feature>
<feature type="strand" evidence="9">
    <location>
        <begin position="59"/>
        <end position="65"/>
    </location>
</feature>
<feature type="strand" evidence="8">
    <location>
        <begin position="68"/>
        <end position="70"/>
    </location>
</feature>
<feature type="strand" evidence="9">
    <location>
        <begin position="72"/>
        <end position="76"/>
    </location>
</feature>
<feature type="strand" evidence="9">
    <location>
        <begin position="84"/>
        <end position="86"/>
    </location>
</feature>
<feature type="strand" evidence="9">
    <location>
        <begin position="88"/>
        <end position="94"/>
    </location>
</feature>
<feature type="turn" evidence="9">
    <location>
        <begin position="98"/>
        <end position="100"/>
    </location>
</feature>
<feature type="strand" evidence="9">
    <location>
        <begin position="101"/>
        <end position="103"/>
    </location>
</feature>
<feature type="turn" evidence="9">
    <location>
        <begin position="105"/>
        <end position="107"/>
    </location>
</feature>
<feature type="strand" evidence="9">
    <location>
        <begin position="109"/>
        <end position="112"/>
    </location>
</feature>
<feature type="turn" evidence="9">
    <location>
        <begin position="118"/>
        <end position="120"/>
    </location>
</feature>
<feature type="strand" evidence="9">
    <location>
        <begin position="123"/>
        <end position="132"/>
    </location>
</feature>
<feature type="turn" evidence="9">
    <location>
        <begin position="133"/>
        <end position="135"/>
    </location>
</feature>
<feature type="strand" evidence="9">
    <location>
        <begin position="138"/>
        <end position="150"/>
    </location>
</feature>
<feature type="strand" evidence="9">
    <location>
        <begin position="158"/>
        <end position="160"/>
    </location>
</feature>
<feature type="strand" evidence="9">
    <location>
        <begin position="162"/>
        <end position="169"/>
    </location>
</feature>
<feature type="strand" evidence="9">
    <location>
        <begin position="177"/>
        <end position="180"/>
    </location>
</feature>
<feature type="turn" evidence="9">
    <location>
        <begin position="192"/>
        <end position="195"/>
    </location>
</feature>
<feature type="strand" evidence="9">
    <location>
        <begin position="198"/>
        <end position="203"/>
    </location>
</feature>
<feature type="turn" evidence="9">
    <location>
        <begin position="205"/>
        <end position="207"/>
    </location>
</feature>
<feature type="strand" evidence="9">
    <location>
        <begin position="208"/>
        <end position="210"/>
    </location>
</feature>
<feature type="turn" evidence="9">
    <location>
        <begin position="212"/>
        <end position="214"/>
    </location>
</feature>
<feature type="strand" evidence="9">
    <location>
        <begin position="216"/>
        <end position="219"/>
    </location>
</feature>
<feature type="turn" evidence="9">
    <location>
        <begin position="226"/>
        <end position="228"/>
    </location>
</feature>
<feature type="strand" evidence="9">
    <location>
        <begin position="231"/>
        <end position="240"/>
    </location>
</feature>
<feature type="helix" evidence="9">
    <location>
        <begin position="241"/>
        <end position="243"/>
    </location>
</feature>
<feature type="strand" evidence="9">
    <location>
        <begin position="249"/>
        <end position="259"/>
    </location>
</feature>
<keyword id="KW-0002">3D-structure</keyword>
<keyword id="KW-0106">Calcium</keyword>
<keyword id="KW-0130">Cell adhesion</keyword>
<keyword id="KW-1003">Cell membrane</keyword>
<keyword id="KW-0165">Cleavage on pair of basic residues</keyword>
<keyword id="KW-0325">Glycoprotein</keyword>
<keyword id="KW-0472">Membrane</keyword>
<keyword id="KW-0479">Metal-binding</keyword>
<keyword id="KW-0597">Phosphoprotein</keyword>
<keyword id="KW-1185">Reference proteome</keyword>
<keyword id="KW-0677">Repeat</keyword>
<keyword id="KW-0732">Signal</keyword>
<keyword id="KW-0812">Transmembrane</keyword>
<keyword id="KW-1133">Transmembrane helix</keyword>
<comment type="function">
    <text>Cadherins are calcium-dependent cell adhesion proteins. They preferentially interact with themselves in a homophilic manner in connecting cells; cadherins may thus contribute to the sorting of heterogeneous cell types.</text>
</comment>
<comment type="subcellular location">
    <subcellularLocation>
        <location>Cell membrane</location>
        <topology>Single-pass type I membrane protein</topology>
    </subcellularLocation>
</comment>
<comment type="developmental stage">
    <text evidence="5">Expressed in fetal, newborn and 7-day-old testis but not in 21-day-old or adult testis.</text>
</comment>
<comment type="domain">
    <text evidence="1">Three calcium ions are usually bound at the interface of each cadherin domain and rigidify the connections, imparting a strong curvature to the full-length ectodomain.</text>
</comment>
<evidence type="ECO:0000250" key="1"/>
<evidence type="ECO:0000255" key="2"/>
<evidence type="ECO:0000255" key="3">
    <source>
        <dbReference type="PROSITE-ProRule" id="PRU00043"/>
    </source>
</evidence>
<evidence type="ECO:0000256" key="4">
    <source>
        <dbReference type="SAM" id="MobiDB-lite"/>
    </source>
</evidence>
<evidence type="ECO:0000269" key="5">
    <source>
    </source>
</evidence>
<evidence type="ECO:0000305" key="6"/>
<evidence type="ECO:0007744" key="7">
    <source>
    </source>
</evidence>
<evidence type="ECO:0007829" key="8">
    <source>
        <dbReference type="PDB" id="3LND"/>
    </source>
</evidence>
<evidence type="ECO:0007829" key="9">
    <source>
        <dbReference type="PDB" id="6CGU"/>
    </source>
</evidence>